<gene>
    <name evidence="1" type="primary">pyrF</name>
    <name type="ordered locus">Smlt0099</name>
</gene>
<protein>
    <recommendedName>
        <fullName evidence="1">Orotidine 5'-phosphate decarboxylase</fullName>
        <ecNumber evidence="1">4.1.1.23</ecNumber>
    </recommendedName>
    <alternativeName>
        <fullName evidence="1">OMP decarboxylase</fullName>
        <shortName evidence="1">OMPDCase</shortName>
        <shortName evidence="1">OMPdecase</shortName>
    </alternativeName>
</protein>
<dbReference type="EC" id="4.1.1.23" evidence="1"/>
<dbReference type="EMBL" id="AM743169">
    <property type="protein sequence ID" value="CAQ43710.1"/>
    <property type="molecule type" value="Genomic_DNA"/>
</dbReference>
<dbReference type="RefSeq" id="WP_005411820.1">
    <property type="nucleotide sequence ID" value="NC_010943.1"/>
</dbReference>
<dbReference type="SMR" id="B2FU58"/>
<dbReference type="EnsemblBacteria" id="CAQ43710">
    <property type="protein sequence ID" value="CAQ43710"/>
    <property type="gene ID" value="Smlt0099"/>
</dbReference>
<dbReference type="GeneID" id="93831169"/>
<dbReference type="KEGG" id="sml:Smlt0099"/>
<dbReference type="eggNOG" id="COG0284">
    <property type="taxonomic scope" value="Bacteria"/>
</dbReference>
<dbReference type="HOGENOM" id="CLU_067069_1_0_6"/>
<dbReference type="UniPathway" id="UPA00070">
    <property type="reaction ID" value="UER00120"/>
</dbReference>
<dbReference type="Proteomes" id="UP000008840">
    <property type="component" value="Chromosome"/>
</dbReference>
<dbReference type="GO" id="GO:0005829">
    <property type="term" value="C:cytosol"/>
    <property type="evidence" value="ECO:0007669"/>
    <property type="project" value="TreeGrafter"/>
</dbReference>
<dbReference type="GO" id="GO:0004590">
    <property type="term" value="F:orotidine-5'-phosphate decarboxylase activity"/>
    <property type="evidence" value="ECO:0007669"/>
    <property type="project" value="UniProtKB-UniRule"/>
</dbReference>
<dbReference type="GO" id="GO:0006207">
    <property type="term" value="P:'de novo' pyrimidine nucleobase biosynthetic process"/>
    <property type="evidence" value="ECO:0007669"/>
    <property type="project" value="InterPro"/>
</dbReference>
<dbReference type="GO" id="GO:0044205">
    <property type="term" value="P:'de novo' UMP biosynthetic process"/>
    <property type="evidence" value="ECO:0007669"/>
    <property type="project" value="UniProtKB-UniRule"/>
</dbReference>
<dbReference type="CDD" id="cd04725">
    <property type="entry name" value="OMP_decarboxylase_like"/>
    <property type="match status" value="1"/>
</dbReference>
<dbReference type="FunFam" id="3.20.20.70:FF:000235">
    <property type="entry name" value="Orotidine 5'-phosphate decarboxylase"/>
    <property type="match status" value="1"/>
</dbReference>
<dbReference type="Gene3D" id="3.20.20.70">
    <property type="entry name" value="Aldolase class I"/>
    <property type="match status" value="1"/>
</dbReference>
<dbReference type="HAMAP" id="MF_01200_B">
    <property type="entry name" value="OMPdecase_type1_B"/>
    <property type="match status" value="1"/>
</dbReference>
<dbReference type="InterPro" id="IPR013785">
    <property type="entry name" value="Aldolase_TIM"/>
</dbReference>
<dbReference type="InterPro" id="IPR014732">
    <property type="entry name" value="OMPdecase"/>
</dbReference>
<dbReference type="InterPro" id="IPR018089">
    <property type="entry name" value="OMPdecase_AS"/>
</dbReference>
<dbReference type="InterPro" id="IPR047596">
    <property type="entry name" value="OMPdecase_bac"/>
</dbReference>
<dbReference type="InterPro" id="IPR001754">
    <property type="entry name" value="OMPdeCOase_dom"/>
</dbReference>
<dbReference type="InterPro" id="IPR011060">
    <property type="entry name" value="RibuloseP-bd_barrel"/>
</dbReference>
<dbReference type="NCBIfam" id="NF001273">
    <property type="entry name" value="PRK00230.1"/>
    <property type="match status" value="1"/>
</dbReference>
<dbReference type="NCBIfam" id="TIGR01740">
    <property type="entry name" value="pyrF"/>
    <property type="match status" value="1"/>
</dbReference>
<dbReference type="PANTHER" id="PTHR32119">
    <property type="entry name" value="OROTIDINE 5'-PHOSPHATE DECARBOXYLASE"/>
    <property type="match status" value="1"/>
</dbReference>
<dbReference type="PANTHER" id="PTHR32119:SF2">
    <property type="entry name" value="OROTIDINE 5'-PHOSPHATE DECARBOXYLASE"/>
    <property type="match status" value="1"/>
</dbReference>
<dbReference type="Pfam" id="PF00215">
    <property type="entry name" value="OMPdecase"/>
    <property type="match status" value="1"/>
</dbReference>
<dbReference type="SMART" id="SM00934">
    <property type="entry name" value="OMPdecase"/>
    <property type="match status" value="1"/>
</dbReference>
<dbReference type="SUPFAM" id="SSF51366">
    <property type="entry name" value="Ribulose-phoshate binding barrel"/>
    <property type="match status" value="1"/>
</dbReference>
<dbReference type="PROSITE" id="PS00156">
    <property type="entry name" value="OMPDECASE"/>
    <property type="match status" value="1"/>
</dbReference>
<name>PYRF_STRMK</name>
<evidence type="ECO:0000255" key="1">
    <source>
        <dbReference type="HAMAP-Rule" id="MF_01200"/>
    </source>
</evidence>
<comment type="function">
    <text evidence="1">Catalyzes the decarboxylation of orotidine 5'-monophosphate (OMP) to uridine 5'-monophosphate (UMP).</text>
</comment>
<comment type="catalytic activity">
    <reaction evidence="1">
        <text>orotidine 5'-phosphate + H(+) = UMP + CO2</text>
        <dbReference type="Rhea" id="RHEA:11596"/>
        <dbReference type="ChEBI" id="CHEBI:15378"/>
        <dbReference type="ChEBI" id="CHEBI:16526"/>
        <dbReference type="ChEBI" id="CHEBI:57538"/>
        <dbReference type="ChEBI" id="CHEBI:57865"/>
        <dbReference type="EC" id="4.1.1.23"/>
    </reaction>
</comment>
<comment type="pathway">
    <text evidence="1">Pyrimidine metabolism; UMP biosynthesis via de novo pathway; UMP from orotate: step 2/2.</text>
</comment>
<comment type="subunit">
    <text evidence="1">Homodimer.</text>
</comment>
<comment type="similarity">
    <text evidence="1">Belongs to the OMP decarboxylase family. Type 1 subfamily.</text>
</comment>
<reference key="1">
    <citation type="journal article" date="2008" name="Genome Biol.">
        <title>The complete genome, comparative and functional analysis of Stenotrophomonas maltophilia reveals an organism heavily shielded by drug resistance determinants.</title>
        <authorList>
            <person name="Crossman L.C."/>
            <person name="Gould V.C."/>
            <person name="Dow J.M."/>
            <person name="Vernikos G.S."/>
            <person name="Okazaki A."/>
            <person name="Sebaihia M."/>
            <person name="Saunders D."/>
            <person name="Arrowsmith C."/>
            <person name="Carver T."/>
            <person name="Peters N."/>
            <person name="Adlem E."/>
            <person name="Kerhornou A."/>
            <person name="Lord A."/>
            <person name="Murphy L."/>
            <person name="Seeger K."/>
            <person name="Squares R."/>
            <person name="Rutter S."/>
            <person name="Quail M.A."/>
            <person name="Rajandream M.A."/>
            <person name="Harris D."/>
            <person name="Churcher C."/>
            <person name="Bentley S.D."/>
            <person name="Parkhill J."/>
            <person name="Thomson N.R."/>
            <person name="Avison M.B."/>
        </authorList>
    </citation>
    <scope>NUCLEOTIDE SEQUENCE [LARGE SCALE GENOMIC DNA]</scope>
    <source>
        <strain>K279a</strain>
    </source>
</reference>
<organism>
    <name type="scientific">Stenotrophomonas maltophilia (strain K279a)</name>
    <dbReference type="NCBI Taxonomy" id="522373"/>
    <lineage>
        <taxon>Bacteria</taxon>
        <taxon>Pseudomonadati</taxon>
        <taxon>Pseudomonadota</taxon>
        <taxon>Gammaproteobacteria</taxon>
        <taxon>Lysobacterales</taxon>
        <taxon>Lysobacteraceae</taxon>
        <taxon>Stenotrophomonas</taxon>
        <taxon>Stenotrophomonas maltophilia group</taxon>
    </lineage>
</organism>
<accession>B2FU58</accession>
<sequence>MSRAPLPLRDDERLIFALDVPDRAQALEWVDRLGDSVAFYKIGMELLASGEYFQVLDELARRDKRVFVDLKFFDIPATAAAVIKRLSQWPVSYATIHGWHPAMMEACAAANSSDMRLLAVTVLTSMGRPDLAQMGIDREPVDVVVERALAAQAAGIDGVIASGQEAGPIRAATGAGFSIVCPGIRPGGPVGDDQKRTVGVAQAFADGADAIVVGRPIRLATDPQAAARAIQQEIASALAAR</sequence>
<proteinExistence type="inferred from homology"/>
<feature type="chain" id="PRO_1000138561" description="Orotidine 5'-phosphate decarboxylase">
    <location>
        <begin position="1"/>
        <end position="241"/>
    </location>
</feature>
<feature type="active site" description="Proton donor" evidence="1">
    <location>
        <position position="71"/>
    </location>
</feature>
<feature type="binding site" evidence="1">
    <location>
        <position position="19"/>
    </location>
    <ligand>
        <name>substrate</name>
    </ligand>
</feature>
<feature type="binding site" evidence="1">
    <location>
        <position position="41"/>
    </location>
    <ligand>
        <name>substrate</name>
    </ligand>
</feature>
<feature type="binding site" evidence="1">
    <location>
        <begin position="69"/>
        <end position="78"/>
    </location>
    <ligand>
        <name>substrate</name>
    </ligand>
</feature>
<feature type="binding site" evidence="1">
    <location>
        <position position="124"/>
    </location>
    <ligand>
        <name>substrate</name>
    </ligand>
</feature>
<feature type="binding site" evidence="1">
    <location>
        <position position="185"/>
    </location>
    <ligand>
        <name>substrate</name>
    </ligand>
</feature>
<feature type="binding site" evidence="1">
    <location>
        <position position="194"/>
    </location>
    <ligand>
        <name>substrate</name>
    </ligand>
</feature>
<feature type="binding site" evidence="1">
    <location>
        <position position="214"/>
    </location>
    <ligand>
        <name>substrate</name>
    </ligand>
</feature>
<feature type="binding site" evidence="1">
    <location>
        <position position="215"/>
    </location>
    <ligand>
        <name>substrate</name>
    </ligand>
</feature>
<keyword id="KW-0210">Decarboxylase</keyword>
<keyword id="KW-0456">Lyase</keyword>
<keyword id="KW-0665">Pyrimidine biosynthesis</keyword>
<keyword id="KW-1185">Reference proteome</keyword>